<organism>
    <name type="scientific">Pseudomonas aeruginosa</name>
    <dbReference type="NCBI Taxonomy" id="287"/>
    <lineage>
        <taxon>Bacteria</taxon>
        <taxon>Pseudomonadati</taxon>
        <taxon>Pseudomonadota</taxon>
        <taxon>Gammaproteobacteria</taxon>
        <taxon>Pseudomonadales</taxon>
        <taxon>Pseudomonadaceae</taxon>
        <taxon>Pseudomonas</taxon>
    </lineage>
</organism>
<evidence type="ECO:0000250" key="1"/>
<evidence type="ECO:0000255" key="2"/>
<evidence type="ECO:0000305" key="3"/>
<dbReference type="EC" id="1.7.2.4"/>
<dbReference type="EMBL" id="X65277">
    <property type="protein sequence ID" value="CAA46381.1"/>
    <property type="molecule type" value="Genomic_DNA"/>
</dbReference>
<dbReference type="SMR" id="Q01710"/>
<dbReference type="UniPathway" id="UPA00652">
    <property type="reaction ID" value="UER00709"/>
</dbReference>
<dbReference type="GO" id="GO:0016020">
    <property type="term" value="C:membrane"/>
    <property type="evidence" value="ECO:0007669"/>
    <property type="project" value="InterPro"/>
</dbReference>
<dbReference type="GO" id="GO:0042597">
    <property type="term" value="C:periplasmic space"/>
    <property type="evidence" value="ECO:0007669"/>
    <property type="project" value="UniProtKB-SubCell"/>
</dbReference>
<dbReference type="GO" id="GO:0005509">
    <property type="term" value="F:calcium ion binding"/>
    <property type="evidence" value="ECO:0007669"/>
    <property type="project" value="UniProtKB-UniRule"/>
</dbReference>
<dbReference type="GO" id="GO:0005507">
    <property type="term" value="F:copper ion binding"/>
    <property type="evidence" value="ECO:0007669"/>
    <property type="project" value="UniProtKB-UniRule"/>
</dbReference>
<dbReference type="GO" id="GO:0004129">
    <property type="term" value="F:cytochrome-c oxidase activity"/>
    <property type="evidence" value="ECO:0007669"/>
    <property type="project" value="InterPro"/>
</dbReference>
<dbReference type="GO" id="GO:0050304">
    <property type="term" value="F:nitrous-oxide reductase activity"/>
    <property type="evidence" value="ECO:0007669"/>
    <property type="project" value="UniProtKB-UniRule"/>
</dbReference>
<dbReference type="GO" id="GO:0019333">
    <property type="term" value="P:denitrification pathway"/>
    <property type="evidence" value="ECO:0007669"/>
    <property type="project" value="UniProtKB-UniPathway"/>
</dbReference>
<dbReference type="CDD" id="cd04223">
    <property type="entry name" value="N2OR_C"/>
    <property type="match status" value="1"/>
</dbReference>
<dbReference type="FunFam" id="2.130.10.10:FF:001102">
    <property type="entry name" value="Nitrous-oxide reductase"/>
    <property type="match status" value="1"/>
</dbReference>
<dbReference type="FunFam" id="2.60.40.420:FF:000095">
    <property type="entry name" value="Nitrous-oxide reductase"/>
    <property type="match status" value="1"/>
</dbReference>
<dbReference type="Gene3D" id="2.60.40.420">
    <property type="entry name" value="Cupredoxins - blue copper proteins"/>
    <property type="match status" value="1"/>
</dbReference>
<dbReference type="Gene3D" id="2.130.10.10">
    <property type="entry name" value="YVTN repeat-like/Quinoprotein amine dehydrogenase"/>
    <property type="match status" value="1"/>
</dbReference>
<dbReference type="HAMAP" id="MF_00716">
    <property type="entry name" value="NosZ"/>
    <property type="match status" value="1"/>
</dbReference>
<dbReference type="InterPro" id="IPR002429">
    <property type="entry name" value="CcO_II-like_C"/>
</dbReference>
<dbReference type="InterPro" id="IPR001505">
    <property type="entry name" value="Copper_CuA"/>
</dbReference>
<dbReference type="InterPro" id="IPR008972">
    <property type="entry name" value="Cupredoxin"/>
</dbReference>
<dbReference type="InterPro" id="IPR011045">
    <property type="entry name" value="N2O_reductase_N"/>
</dbReference>
<dbReference type="InterPro" id="IPR034205">
    <property type="entry name" value="N2OR_C"/>
</dbReference>
<dbReference type="InterPro" id="IPR023644">
    <property type="entry name" value="NO_Rdtase"/>
</dbReference>
<dbReference type="InterPro" id="IPR041114">
    <property type="entry name" value="Nos_propeller"/>
</dbReference>
<dbReference type="InterPro" id="IPR041142">
    <property type="entry name" value="NOS_propeller_2"/>
</dbReference>
<dbReference type="InterPro" id="IPR051403">
    <property type="entry name" value="NosZ/Cyto_c_oxidase_sub2"/>
</dbReference>
<dbReference type="InterPro" id="IPR006311">
    <property type="entry name" value="TAT_signal"/>
</dbReference>
<dbReference type="InterPro" id="IPR015943">
    <property type="entry name" value="WD40/YVTN_repeat-like_dom_sf"/>
</dbReference>
<dbReference type="NCBIfam" id="TIGR04244">
    <property type="entry name" value="nitrous_NosZ_RR"/>
    <property type="match status" value="1"/>
</dbReference>
<dbReference type="PANTHER" id="PTHR42838">
    <property type="entry name" value="CYTOCHROME C OXIDASE SUBUNIT II"/>
    <property type="match status" value="1"/>
</dbReference>
<dbReference type="PANTHER" id="PTHR42838:SF2">
    <property type="entry name" value="NITROUS-OXIDE REDUCTASE"/>
    <property type="match status" value="1"/>
</dbReference>
<dbReference type="Pfam" id="PF18764">
    <property type="entry name" value="nos_propeller"/>
    <property type="match status" value="1"/>
</dbReference>
<dbReference type="Pfam" id="PF18793">
    <property type="entry name" value="nos_propeller_2"/>
    <property type="match status" value="1"/>
</dbReference>
<dbReference type="SUPFAM" id="SSF49503">
    <property type="entry name" value="Cupredoxins"/>
    <property type="match status" value="1"/>
</dbReference>
<dbReference type="SUPFAM" id="SSF50974">
    <property type="entry name" value="Nitrous oxide reductase, N-terminal domain"/>
    <property type="match status" value="1"/>
</dbReference>
<dbReference type="PROSITE" id="PS00078">
    <property type="entry name" value="COX2"/>
    <property type="match status" value="1"/>
</dbReference>
<dbReference type="PROSITE" id="PS50857">
    <property type="entry name" value="COX2_CUA"/>
    <property type="match status" value="1"/>
</dbReference>
<dbReference type="PROSITE" id="PS51318">
    <property type="entry name" value="TAT"/>
    <property type="match status" value="1"/>
</dbReference>
<feature type="signal peptide" description="Tat-type signal" evidence="2">
    <location>
        <begin position="1"/>
        <end position="49"/>
    </location>
</feature>
<feature type="chain" id="PRO_0000019829" description="Nitrous-oxide reductase">
    <location>
        <begin position="50"/>
        <end position="634"/>
    </location>
</feature>
<feature type="region of interest" description="COX2-like">
    <location>
        <begin position="538"/>
        <end position="634"/>
    </location>
</feature>
<feature type="binding site" evidence="1">
    <location>
        <position position="125"/>
    </location>
    <ligand>
        <name>Cu cation</name>
        <dbReference type="ChEBI" id="CHEBI:23378"/>
        <label>Z2</label>
    </ligand>
</feature>
<feature type="binding site" evidence="1">
    <location>
        <position position="126"/>
    </location>
    <ligand>
        <name>Cu cation</name>
        <dbReference type="ChEBI" id="CHEBI:23378"/>
        <label>Z3</label>
    </ligand>
</feature>
<feature type="binding site" evidence="1">
    <location>
        <position position="174"/>
    </location>
    <ligand>
        <name>Cu cation</name>
        <dbReference type="ChEBI" id="CHEBI:23378"/>
        <label>Z2</label>
    </ligand>
</feature>
<feature type="binding site" evidence="1">
    <location>
        <position position="252"/>
    </location>
    <ligand>
        <name>Ca(2+)</name>
        <dbReference type="ChEBI" id="CHEBI:29108"/>
        <label>2</label>
    </ligand>
</feature>
<feature type="binding site" evidence="1">
    <location>
        <position position="255"/>
    </location>
    <ligand>
        <name>Ca(2+)</name>
        <dbReference type="ChEBI" id="CHEBI:29108"/>
        <label>2</label>
    </ligand>
</feature>
<feature type="binding site" evidence="1">
    <location>
        <position position="263"/>
    </location>
    <ligand>
        <name>Ca(2+)</name>
        <dbReference type="ChEBI" id="CHEBI:29108"/>
        <label>2</label>
    </ligand>
</feature>
<feature type="binding site" evidence="1">
    <location>
        <position position="269"/>
    </location>
    <ligand>
        <name>Ca(2+)</name>
        <dbReference type="ChEBI" id="CHEBI:29108"/>
        <label>2</label>
    </ligand>
</feature>
<feature type="binding site" evidence="1">
    <location>
        <position position="320"/>
    </location>
    <ligand>
        <name>Ca(2+)</name>
        <dbReference type="ChEBI" id="CHEBI:29108"/>
        <label>2</label>
    </ligand>
</feature>
<feature type="binding site" evidence="1">
    <location>
        <position position="322"/>
    </location>
    <ligand>
        <name>Cu cation</name>
        <dbReference type="ChEBI" id="CHEBI:23378"/>
        <label>Z1</label>
    </ligand>
</feature>
<feature type="binding site" evidence="1">
    <location>
        <position position="378"/>
    </location>
    <ligand>
        <name>Cu cation</name>
        <dbReference type="ChEBI" id="CHEBI:23378"/>
        <label>Z1</label>
    </ligand>
</feature>
<feature type="binding site" evidence="1">
    <location>
        <position position="429"/>
    </location>
    <ligand>
        <name>Cu cation</name>
        <dbReference type="ChEBI" id="CHEBI:23378"/>
        <label>Z3</label>
    </ligand>
</feature>
<feature type="binding site" evidence="1">
    <location>
        <position position="450"/>
    </location>
    <ligand>
        <name>Ca(2+)</name>
        <dbReference type="ChEBI" id="CHEBI:29108"/>
        <label>1</label>
    </ligand>
</feature>
<feature type="binding site" evidence="1">
    <location>
        <position position="465"/>
    </location>
    <ligand>
        <name>Ca(2+)</name>
        <dbReference type="ChEBI" id="CHEBI:29108"/>
        <label>1</label>
    </ligand>
</feature>
<feature type="binding site" evidence="1">
    <location>
        <position position="490"/>
    </location>
    <ligand>
        <name>Cu cation</name>
        <dbReference type="ChEBI" id="CHEBI:23378"/>
        <label>Z4</label>
    </ligand>
</feature>
<feature type="binding site" evidence="1">
    <location>
        <position position="579"/>
    </location>
    <ligand>
        <name>Cu cation</name>
        <dbReference type="ChEBI" id="CHEBI:23378"/>
        <label>A1</label>
    </ligand>
</feature>
<feature type="binding site" evidence="1">
    <location>
        <position position="614"/>
    </location>
    <ligand>
        <name>Cu cation</name>
        <dbReference type="ChEBI" id="CHEBI:23378"/>
        <label>A1</label>
    </ligand>
</feature>
<feature type="binding site" evidence="1">
    <location>
        <position position="614"/>
    </location>
    <ligand>
        <name>Cu cation</name>
        <dbReference type="ChEBI" id="CHEBI:23378"/>
        <label>A2</label>
    </ligand>
</feature>
<feature type="binding site" evidence="1">
    <location>
        <position position="616"/>
    </location>
    <ligand>
        <name>Cu cation</name>
        <dbReference type="ChEBI" id="CHEBI:23378"/>
        <label>A2</label>
    </ligand>
</feature>
<feature type="binding site" evidence="1">
    <location>
        <position position="618"/>
    </location>
    <ligand>
        <name>Cu cation</name>
        <dbReference type="ChEBI" id="CHEBI:23378"/>
        <label>A1</label>
    </ligand>
</feature>
<feature type="binding site" evidence="1">
    <location>
        <position position="618"/>
    </location>
    <ligand>
        <name>Cu cation</name>
        <dbReference type="ChEBI" id="CHEBI:23378"/>
        <label>A2</label>
    </ligand>
</feature>
<feature type="binding site" evidence="1">
    <location>
        <position position="622"/>
    </location>
    <ligand>
        <name>Cu cation</name>
        <dbReference type="ChEBI" id="CHEBI:23378"/>
        <label>A2</label>
    </ligand>
</feature>
<feature type="binding site" evidence="1">
    <location>
        <position position="625"/>
    </location>
    <ligand>
        <name>Cu cation</name>
        <dbReference type="ChEBI" id="CHEBI:23378"/>
        <label>A1</label>
    </ligand>
</feature>
<keyword id="KW-0106">Calcium</keyword>
<keyword id="KW-0186">Copper</keyword>
<keyword id="KW-0479">Metal-binding</keyword>
<keyword id="KW-0560">Oxidoreductase</keyword>
<keyword id="KW-0574">Periplasm</keyword>
<keyword id="KW-0732">Signal</keyword>
<accession>Q01710</accession>
<gene>
    <name type="primary">nosZ</name>
</gene>
<proteinExistence type="inferred from homology"/>
<name>NOSZ_PSEAI</name>
<protein>
    <recommendedName>
        <fullName>Nitrous-oxide reductase</fullName>
        <ecNumber>1.7.2.4</ecNumber>
    </recommendedName>
    <alternativeName>
        <fullName>N(2)OR</fullName>
    </alternativeName>
    <alternativeName>
        <fullName>N2O reductase</fullName>
    </alternativeName>
</protein>
<comment type="function">
    <text>Nitrous-oxide reductase is part of a bacterial respiratory system which is activated under anaerobic conditions in the presence of nitrate or nitrous oxide.</text>
</comment>
<comment type="catalytic activity">
    <reaction>
        <text>N2 + 2 Fe(III)-[cytochrome c] + H2O = nitrous oxide + 2 Fe(II)-[cytochrome c] + 2 H(+)</text>
        <dbReference type="Rhea" id="RHEA:43108"/>
        <dbReference type="Rhea" id="RHEA-COMP:10350"/>
        <dbReference type="Rhea" id="RHEA-COMP:14399"/>
        <dbReference type="ChEBI" id="CHEBI:15377"/>
        <dbReference type="ChEBI" id="CHEBI:15378"/>
        <dbReference type="ChEBI" id="CHEBI:17045"/>
        <dbReference type="ChEBI" id="CHEBI:17997"/>
        <dbReference type="ChEBI" id="CHEBI:29033"/>
        <dbReference type="ChEBI" id="CHEBI:29034"/>
        <dbReference type="EC" id="1.7.2.4"/>
    </reaction>
</comment>
<comment type="cofactor">
    <cofactor evidence="1">
        <name>Ca(2+)</name>
        <dbReference type="ChEBI" id="CHEBI:29108"/>
    </cofactor>
    <text evidence="1">Binds 2 calcium ions per subunit.</text>
</comment>
<comment type="cofactor">
    <cofactor evidence="1">
        <name>Cu cation</name>
        <dbReference type="ChEBI" id="CHEBI:23378"/>
    </cofactor>
    <text evidence="1">Binds 6 Cu cations per subunit. Each subunit contains 2 copper centers; Cu(A) (binuclear) and Cu(Z) (tetranuclear). Cu(Z) is thought to be the site of nitrous oxide reduction.</text>
</comment>
<comment type="pathway">
    <text>Nitrogen metabolism; nitrate reduction (denitrification); dinitrogen from nitrate: step 4/4.</text>
</comment>
<comment type="subunit">
    <text evidence="1">Homodimer.</text>
</comment>
<comment type="subcellular location">
    <subcellularLocation>
        <location>Periplasm</location>
    </subcellularLocation>
</comment>
<comment type="PTM">
    <text>Predicted to be exported by the Tat system. The position of the signal peptide cleavage has not been experimentally proven.</text>
</comment>
<comment type="similarity">
    <text evidence="3">Belongs to the NosZ family.</text>
</comment>
<comment type="similarity">
    <text evidence="3">In the C-terminal section; belongs to the cytochrome c oxidase subunit 2 family.</text>
</comment>
<reference key="1">
    <citation type="journal article" date="1992" name="Eur. J. Biochem.">
        <title>Derived amino acid sequences of the nosZ gene (respiratory N2O reductase) from Alcaligenes eutrophus, Pseudomonas aeruginosa and Pseudomonas stutzeri reveal potential copper-binding residues. Implications for the CuA site of N2O reductase and cytochrome-c oxidase.</title>
        <authorList>
            <person name="Zumft W.G."/>
            <person name="Dreusch A."/>
            <person name="Loechelt S."/>
            <person name="Cuypers H."/>
            <person name="Friedrich B."/>
            <person name="Schneider B."/>
        </authorList>
    </citation>
    <scope>NUCLEOTIDE SEQUENCE [GENOMIC DNA]</scope>
    <source>
        <strain>ATCC 10145 / DSM 50071 / JCM 5962 / LMG 1242 / NBRC 12689 / NCIMB 8295 / NCTC 10332 / NRRL B-771</strain>
    </source>
</reference>
<sequence length="634" mass="70695">MSDKQTDKDEKTGLSRRGFLGASALTRSAVAASGLVGGVMTRDSWAAAAKEAQQKIHVAPGELDEYYGFWSGGHQGEVRVLGVPSMRELMRIPVFNVDSATGWGLTNESRHILGDTAKFLNGDCHHPHISMTDGKYDGKYLFINDKANSRVARIRLDIMKCDKITTIPNVQAIHGLRLQKVPHTKYVFCNAEFIIPHPNDGKVFDLEDENSFTMYNAVDAETMEVAFQVIVDGNLDNTDADYTGRFTAATCYNSEKAFDLGGMMRNERDWVVVFDISAVEKEIKAGRFITLGDSKVPVVDGRKKDGKDSVVTRYIPVPKNPHGLNTSTDGKYFIANGKLSPTCSMIAIDLLPDLFAGKLKDPRDVVVGEPELGLGPLHTTFDGRGNAYTTLFIDSQVVKWNMEEARRAYKGEKVNYIKQKLDVHYQPGHLHASLCETSEADGKWLVALSKFSKDRFLPTGPLHPENDQLIDISGDVMKLVHDGPTFAEPHDCIMARRDQIKTRKIWDRNDPFFAPTVAMAKKDGINLEEDNKVIRDGNKVRVYMTSMAPAYGLTEFKVKQGNEVTVVITNMDQIEDVSHGFVMVNHGVSMEISPQQTSSITFIADKPGLHWYYCSWFCHALHMEMVGRMMVEPA</sequence>